<reference key="1">
    <citation type="journal article" date="2002" name="Proc. Natl. Acad. Sci. U.S.A.">
        <title>Extensive mosaic structure revealed by the complete genome sequence of uropathogenic Escherichia coli.</title>
        <authorList>
            <person name="Welch R.A."/>
            <person name="Burland V."/>
            <person name="Plunkett G. III"/>
            <person name="Redford P."/>
            <person name="Roesch P."/>
            <person name="Rasko D."/>
            <person name="Buckles E.L."/>
            <person name="Liou S.-R."/>
            <person name="Boutin A."/>
            <person name="Hackett J."/>
            <person name="Stroud D."/>
            <person name="Mayhew G.F."/>
            <person name="Rose D.J."/>
            <person name="Zhou S."/>
            <person name="Schwartz D.C."/>
            <person name="Perna N.T."/>
            <person name="Mobley H.L.T."/>
            <person name="Donnenberg M.S."/>
            <person name="Blattner F.R."/>
        </authorList>
    </citation>
    <scope>NUCLEOTIDE SEQUENCE [LARGE SCALE GENOMIC DNA]</scope>
    <source>
        <strain>CFT073 / ATCC 700928 / UPEC</strain>
    </source>
</reference>
<feature type="initiator methionine" description="Removed" evidence="1">
    <location>
        <position position="1"/>
    </location>
</feature>
<feature type="chain" id="PRO_0000095602" description="RNA-binding protein Hfq">
    <location>
        <begin position="2"/>
        <end position="102"/>
    </location>
</feature>
<feature type="domain" description="Sm" evidence="3">
    <location>
        <begin position="9"/>
        <end position="68"/>
    </location>
</feature>
<feature type="region of interest" description="Disordered" evidence="4">
    <location>
        <begin position="63"/>
        <end position="102"/>
    </location>
</feature>
<feature type="compositionally biased region" description="Polar residues" evidence="4">
    <location>
        <begin position="70"/>
        <end position="96"/>
    </location>
</feature>
<keyword id="KW-1185">Reference proteome</keyword>
<keyword id="KW-0694">RNA-binding</keyword>
<keyword id="KW-0346">Stress response</keyword>
<organism>
    <name type="scientific">Escherichia coli O6:H1 (strain CFT073 / ATCC 700928 / UPEC)</name>
    <dbReference type="NCBI Taxonomy" id="199310"/>
    <lineage>
        <taxon>Bacteria</taxon>
        <taxon>Pseudomonadati</taxon>
        <taxon>Pseudomonadota</taxon>
        <taxon>Gammaproteobacteria</taxon>
        <taxon>Enterobacterales</taxon>
        <taxon>Enterobacteriaceae</taxon>
        <taxon>Escherichia</taxon>
    </lineage>
</organism>
<name>HFQ_ECOL6</name>
<sequence length="102" mass="11166">MAKGQSLQDPFLNALRRERVPVSIYLVNGIKLQGQIESFDQFVILLKNTVSQMVYKHAISTVVPSRPVSHHSNNAGGGTSSNYHHGSSAQNTSAQQDSEETE</sequence>
<comment type="function">
    <text evidence="2">RNA chaperone that binds small regulatory RNA (sRNAs) and mRNAs to facilitate mRNA translational regulation in response to envelope stress, environmental stress and changes in metabolite concentrations. Also binds with high specificity to tRNAs.</text>
</comment>
<comment type="subunit">
    <text evidence="2">Homohexamer.</text>
</comment>
<comment type="similarity">
    <text evidence="2">Belongs to the Hfq family.</text>
</comment>
<evidence type="ECO:0000250" key="1"/>
<evidence type="ECO:0000255" key="2">
    <source>
        <dbReference type="HAMAP-Rule" id="MF_00436"/>
    </source>
</evidence>
<evidence type="ECO:0000255" key="3">
    <source>
        <dbReference type="PROSITE-ProRule" id="PRU01346"/>
    </source>
</evidence>
<evidence type="ECO:0000256" key="4">
    <source>
        <dbReference type="SAM" id="MobiDB-lite"/>
    </source>
</evidence>
<gene>
    <name evidence="2" type="primary">hfq</name>
    <name type="ordered locus">c5256</name>
</gene>
<dbReference type="EMBL" id="AE014075">
    <property type="protein sequence ID" value="AAN83678.1"/>
    <property type="molecule type" value="Genomic_DNA"/>
</dbReference>
<dbReference type="RefSeq" id="WP_001051883.1">
    <property type="nucleotide sequence ID" value="NZ_CP051263.1"/>
</dbReference>
<dbReference type="SMR" id="P0A6X4"/>
<dbReference type="STRING" id="199310.c5256"/>
<dbReference type="GeneID" id="93777649"/>
<dbReference type="KEGG" id="ecc:c5256"/>
<dbReference type="eggNOG" id="COG1923">
    <property type="taxonomic scope" value="Bacteria"/>
</dbReference>
<dbReference type="HOGENOM" id="CLU_113688_2_1_6"/>
<dbReference type="BioCyc" id="ECOL199310:C5256-MONOMER"/>
<dbReference type="Proteomes" id="UP000001410">
    <property type="component" value="Chromosome"/>
</dbReference>
<dbReference type="GO" id="GO:0005829">
    <property type="term" value="C:cytosol"/>
    <property type="evidence" value="ECO:0007669"/>
    <property type="project" value="TreeGrafter"/>
</dbReference>
<dbReference type="GO" id="GO:0003723">
    <property type="term" value="F:RNA binding"/>
    <property type="evidence" value="ECO:0007669"/>
    <property type="project" value="UniProtKB-UniRule"/>
</dbReference>
<dbReference type="GO" id="GO:0006355">
    <property type="term" value="P:regulation of DNA-templated transcription"/>
    <property type="evidence" value="ECO:0007669"/>
    <property type="project" value="InterPro"/>
</dbReference>
<dbReference type="GO" id="GO:0043487">
    <property type="term" value="P:regulation of RNA stability"/>
    <property type="evidence" value="ECO:0007669"/>
    <property type="project" value="TreeGrafter"/>
</dbReference>
<dbReference type="GO" id="GO:0045974">
    <property type="term" value="P:regulation of translation, ncRNA-mediated"/>
    <property type="evidence" value="ECO:0007669"/>
    <property type="project" value="TreeGrafter"/>
</dbReference>
<dbReference type="CDD" id="cd01716">
    <property type="entry name" value="Hfq"/>
    <property type="match status" value="1"/>
</dbReference>
<dbReference type="FunFam" id="2.30.30.100:FF:000001">
    <property type="entry name" value="RNA-binding protein Hfq"/>
    <property type="match status" value="1"/>
</dbReference>
<dbReference type="Gene3D" id="2.30.30.100">
    <property type="match status" value="1"/>
</dbReference>
<dbReference type="HAMAP" id="MF_00436">
    <property type="entry name" value="Hfq"/>
    <property type="match status" value="1"/>
</dbReference>
<dbReference type="InterPro" id="IPR005001">
    <property type="entry name" value="Hfq"/>
</dbReference>
<dbReference type="InterPro" id="IPR010920">
    <property type="entry name" value="LSM_dom_sf"/>
</dbReference>
<dbReference type="InterPro" id="IPR047575">
    <property type="entry name" value="Sm"/>
</dbReference>
<dbReference type="NCBIfam" id="TIGR02383">
    <property type="entry name" value="Hfq"/>
    <property type="match status" value="1"/>
</dbReference>
<dbReference type="NCBIfam" id="NF001602">
    <property type="entry name" value="PRK00395.1"/>
    <property type="match status" value="1"/>
</dbReference>
<dbReference type="PANTHER" id="PTHR34772">
    <property type="entry name" value="RNA-BINDING PROTEIN HFQ"/>
    <property type="match status" value="1"/>
</dbReference>
<dbReference type="PANTHER" id="PTHR34772:SF1">
    <property type="entry name" value="RNA-BINDING PROTEIN HFQ"/>
    <property type="match status" value="1"/>
</dbReference>
<dbReference type="Pfam" id="PF17209">
    <property type="entry name" value="Hfq"/>
    <property type="match status" value="1"/>
</dbReference>
<dbReference type="SUPFAM" id="SSF50182">
    <property type="entry name" value="Sm-like ribonucleoproteins"/>
    <property type="match status" value="1"/>
</dbReference>
<dbReference type="PROSITE" id="PS52002">
    <property type="entry name" value="SM"/>
    <property type="match status" value="1"/>
</dbReference>
<proteinExistence type="inferred from homology"/>
<protein>
    <recommendedName>
        <fullName evidence="2">RNA-binding protein Hfq</fullName>
    </recommendedName>
</protein>
<accession>P0A6X4</accession>
<accession>O24728</accession>
<accession>P25521</accession>
<accession>Q47383</accession>